<evidence type="ECO:0000250" key="1"/>
<evidence type="ECO:0000255" key="2">
    <source>
        <dbReference type="PROSITE-ProRule" id="PRU00241"/>
    </source>
</evidence>
<evidence type="ECO:0000305" key="3"/>
<protein>
    <recommendedName>
        <fullName>Probable Rubredoxin-1</fullName>
        <shortName>RD 1</shortName>
    </recommendedName>
</protein>
<proteinExistence type="inferred from homology"/>
<dbReference type="EMBL" id="L77117">
    <property type="protein sequence ID" value="AAB98730.1"/>
    <property type="molecule type" value="Genomic_DNA"/>
</dbReference>
<dbReference type="PIR" id="G64391">
    <property type="entry name" value="G64391"/>
</dbReference>
<dbReference type="RefSeq" id="WP_010870240.1">
    <property type="nucleotide sequence ID" value="NC_000909.1"/>
</dbReference>
<dbReference type="SMR" id="Q58145"/>
<dbReference type="FunCoup" id="Q58145">
    <property type="interactions" value="2"/>
</dbReference>
<dbReference type="STRING" id="243232.MJ_0735"/>
<dbReference type="PaxDb" id="243232-MJ_0735"/>
<dbReference type="EnsemblBacteria" id="AAB98730">
    <property type="protein sequence ID" value="AAB98730"/>
    <property type="gene ID" value="MJ_0735"/>
</dbReference>
<dbReference type="KEGG" id="mja:MJ_0735"/>
<dbReference type="eggNOG" id="arCOG04391">
    <property type="taxonomic scope" value="Archaea"/>
</dbReference>
<dbReference type="HOGENOM" id="CLU_128747_1_0_2"/>
<dbReference type="InParanoid" id="Q58145"/>
<dbReference type="OrthoDB" id="371635at2157"/>
<dbReference type="PhylomeDB" id="Q58145"/>
<dbReference type="Proteomes" id="UP000000805">
    <property type="component" value="Chromosome"/>
</dbReference>
<dbReference type="GO" id="GO:0009055">
    <property type="term" value="F:electron transfer activity"/>
    <property type="evidence" value="ECO:0000318"/>
    <property type="project" value="GO_Central"/>
</dbReference>
<dbReference type="GO" id="GO:0005506">
    <property type="term" value="F:iron ion binding"/>
    <property type="evidence" value="ECO:0007669"/>
    <property type="project" value="InterPro"/>
</dbReference>
<dbReference type="GO" id="GO:0043448">
    <property type="term" value="P:alkane catabolic process"/>
    <property type="evidence" value="ECO:0000318"/>
    <property type="project" value="GO_Central"/>
</dbReference>
<dbReference type="CDD" id="cd00730">
    <property type="entry name" value="rubredoxin"/>
    <property type="match status" value="1"/>
</dbReference>
<dbReference type="FunFam" id="2.20.28.10:FF:000001">
    <property type="entry name" value="Rubredoxin"/>
    <property type="match status" value="1"/>
</dbReference>
<dbReference type="Gene3D" id="2.20.28.10">
    <property type="match status" value="1"/>
</dbReference>
<dbReference type="InterPro" id="IPR024934">
    <property type="entry name" value="Rubredoxin-like_dom"/>
</dbReference>
<dbReference type="InterPro" id="IPR024935">
    <property type="entry name" value="Rubredoxin_dom"/>
</dbReference>
<dbReference type="InterPro" id="IPR050526">
    <property type="entry name" value="Rubredoxin_ET"/>
</dbReference>
<dbReference type="PANTHER" id="PTHR47627">
    <property type="entry name" value="RUBREDOXIN"/>
    <property type="match status" value="1"/>
</dbReference>
<dbReference type="PANTHER" id="PTHR47627:SF1">
    <property type="entry name" value="RUBREDOXIN-1-RELATED"/>
    <property type="match status" value="1"/>
</dbReference>
<dbReference type="Pfam" id="PF00301">
    <property type="entry name" value="Rubredoxin"/>
    <property type="match status" value="1"/>
</dbReference>
<dbReference type="PRINTS" id="PR00163">
    <property type="entry name" value="RUBREDOXIN"/>
</dbReference>
<dbReference type="SUPFAM" id="SSF57802">
    <property type="entry name" value="Rubredoxin-like"/>
    <property type="match status" value="1"/>
</dbReference>
<dbReference type="PROSITE" id="PS50903">
    <property type="entry name" value="RUBREDOXIN_LIKE"/>
    <property type="match status" value="1"/>
</dbReference>
<name>RUBR1_METJA</name>
<feature type="chain" id="PRO_0000135058" description="Probable Rubredoxin-1">
    <location>
        <begin position="1"/>
        <end position="80"/>
    </location>
</feature>
<feature type="domain" description="Rubredoxin-like" evidence="2">
    <location>
        <begin position="19"/>
        <end position="72"/>
    </location>
</feature>
<feature type="binding site" evidence="2">
    <location>
        <position position="24"/>
    </location>
    <ligand>
        <name>Fe cation</name>
        <dbReference type="ChEBI" id="CHEBI:24875"/>
    </ligand>
</feature>
<feature type="binding site" evidence="2">
    <location>
        <position position="27"/>
    </location>
    <ligand>
        <name>Fe cation</name>
        <dbReference type="ChEBI" id="CHEBI:24875"/>
    </ligand>
</feature>
<feature type="binding site" evidence="2">
    <location>
        <position position="57"/>
    </location>
    <ligand>
        <name>Fe cation</name>
        <dbReference type="ChEBI" id="CHEBI:24875"/>
    </ligand>
</feature>
<feature type="binding site" evidence="2">
    <location>
        <position position="60"/>
    </location>
    <ligand>
        <name>Fe cation</name>
        <dbReference type="ChEBI" id="CHEBI:24875"/>
    </ligand>
</feature>
<keyword id="KW-0249">Electron transport</keyword>
<keyword id="KW-0408">Iron</keyword>
<keyword id="KW-0479">Metal-binding</keyword>
<keyword id="KW-1185">Reference proteome</keyword>
<keyword id="KW-0813">Transport</keyword>
<comment type="function">
    <text evidence="1">Rubredoxin is a small nonheme, iron protein lacking acid-labile sulfide. Its single Fe, chelated to 4 Cys, functions as an electron acceptor and may also stabilize the conformation of the molecule (By similarity).</text>
</comment>
<comment type="cofactor">
    <cofactor evidence="1">
        <name>Fe(3+)</name>
        <dbReference type="ChEBI" id="CHEBI:29034"/>
    </cofactor>
    <text evidence="1">Binds 1 Fe(3+) ion per subunit.</text>
</comment>
<comment type="similarity">
    <text evidence="3">Belongs to the rubredoxin family.</text>
</comment>
<accession>Q58145</accession>
<gene>
    <name type="ordered locus">MJ0735</name>
</gene>
<reference key="1">
    <citation type="journal article" date="1996" name="Science">
        <title>Complete genome sequence of the methanogenic archaeon, Methanococcus jannaschii.</title>
        <authorList>
            <person name="Bult C.J."/>
            <person name="White O."/>
            <person name="Olsen G.J."/>
            <person name="Zhou L."/>
            <person name="Fleischmann R.D."/>
            <person name="Sutton G.G."/>
            <person name="Blake J.A."/>
            <person name="FitzGerald L.M."/>
            <person name="Clayton R.A."/>
            <person name="Gocayne J.D."/>
            <person name="Kerlavage A.R."/>
            <person name="Dougherty B.A."/>
            <person name="Tomb J.-F."/>
            <person name="Adams M.D."/>
            <person name="Reich C.I."/>
            <person name="Overbeek R."/>
            <person name="Kirkness E.F."/>
            <person name="Weinstock K.G."/>
            <person name="Merrick J.M."/>
            <person name="Glodek A."/>
            <person name="Scott J.L."/>
            <person name="Geoghagen N.S.M."/>
            <person name="Weidman J.F."/>
            <person name="Fuhrmann J.L."/>
            <person name="Nguyen D."/>
            <person name="Utterback T.R."/>
            <person name="Kelley J.M."/>
            <person name="Peterson J.D."/>
            <person name="Sadow P.W."/>
            <person name="Hanna M.C."/>
            <person name="Cotton M.D."/>
            <person name="Roberts K.M."/>
            <person name="Hurst M.A."/>
            <person name="Kaine B.P."/>
            <person name="Borodovsky M."/>
            <person name="Klenk H.-P."/>
            <person name="Fraser C.M."/>
            <person name="Smith H.O."/>
            <person name="Woese C.R."/>
            <person name="Venter J.C."/>
        </authorList>
    </citation>
    <scope>NUCLEOTIDE SEQUENCE [LARGE SCALE GENOMIC DNA]</scope>
    <source>
        <strain>ATCC 43067 / DSM 2661 / JAL-1 / JCM 10045 / NBRC 100440</strain>
    </source>
</reference>
<organism>
    <name type="scientific">Methanocaldococcus jannaschii (strain ATCC 43067 / DSM 2661 / JAL-1 / JCM 10045 / NBRC 100440)</name>
    <name type="common">Methanococcus jannaschii</name>
    <dbReference type="NCBI Taxonomy" id="243232"/>
    <lineage>
        <taxon>Archaea</taxon>
        <taxon>Methanobacteriati</taxon>
        <taxon>Methanobacteriota</taxon>
        <taxon>Methanomada group</taxon>
        <taxon>Methanococci</taxon>
        <taxon>Methanococcales</taxon>
        <taxon>Methanocaldococcaceae</taxon>
        <taxon>Methanocaldococcus</taxon>
    </lineage>
</organism>
<sequence length="80" mass="9297">MVELKIACKLDGSCEKPRYRKYKCKVCGWVYDPLKGDPSQNIPPKTPFEELPDTWICPVCRGKVGKESFEPLDEWVEFDE</sequence>